<feature type="peptide" id="PRO_0000043903" description="Lymna-DF-amide 2">
    <location>
        <begin position="1"/>
        <end position="13"/>
    </location>
</feature>
<feature type="modified residue" description="Phenylalanine amide" evidence="1">
    <location>
        <position position="13"/>
    </location>
</feature>
<feature type="unsure residue">
    <location>
        <position position="8"/>
    </location>
</feature>
<protein>
    <recommendedName>
        <fullName>Lymna-DF-amide 2</fullName>
    </recommendedName>
</protein>
<proteinExistence type="evidence at protein level"/>
<organism>
    <name type="scientific">Lymnaea stagnalis</name>
    <name type="common">Great pond snail</name>
    <name type="synonym">Helix stagnalis</name>
    <dbReference type="NCBI Taxonomy" id="6523"/>
    <lineage>
        <taxon>Eukaryota</taxon>
        <taxon>Metazoa</taxon>
        <taxon>Spiralia</taxon>
        <taxon>Lophotrochozoa</taxon>
        <taxon>Mollusca</taxon>
        <taxon>Gastropoda</taxon>
        <taxon>Heterobranchia</taxon>
        <taxon>Euthyneura</taxon>
        <taxon>Panpulmonata</taxon>
        <taxon>Hygrophila</taxon>
        <taxon>Lymnaeoidea</taxon>
        <taxon>Lymnaeidae</taxon>
        <taxon>Lymnaea</taxon>
    </lineage>
</organism>
<keyword id="KW-0027">Amidation</keyword>
<keyword id="KW-0903">Direct protein sequencing</keyword>
<keyword id="KW-0527">Neuropeptide</keyword>
<keyword id="KW-0964">Secreted</keyword>
<dbReference type="PIR" id="S32472">
    <property type="entry name" value="S32472"/>
</dbReference>
<dbReference type="GO" id="GO:0005576">
    <property type="term" value="C:extracellular region"/>
    <property type="evidence" value="ECO:0007669"/>
    <property type="project" value="UniProtKB-SubCell"/>
</dbReference>
<dbReference type="GO" id="GO:0007218">
    <property type="term" value="P:neuropeptide signaling pathway"/>
    <property type="evidence" value="ECO:0007669"/>
    <property type="project" value="UniProtKB-KW"/>
</dbReference>
<comment type="subcellular location">
    <subcellularLocation>
        <location>Secreted</location>
    </subcellularLocation>
</comment>
<accession>P80179</accession>
<sequence>PYDRISSSAFSDF</sequence>
<name>DFAM2_LYMST</name>
<reference key="1">
    <citation type="journal article" date="1993" name="Eur. J. Biochem.">
        <title>LymnaDFamides, a new family of neuropeptides from the pond snail, Lymnaea stagnalis. Clue to cholecystokinin immunoreactivity in invertebrates?</title>
        <authorList>
            <person name="Johnsen A.H."/>
            <person name="Rehfeld J.F."/>
        </authorList>
    </citation>
    <scope>PROTEIN SEQUENCE</scope>
    <scope>AMIDATION AT PHE-13</scope>
    <source>
        <tissue>Ganglion</tissue>
    </source>
</reference>
<evidence type="ECO:0000269" key="1">
    <source>
    </source>
</evidence>